<gene>
    <name evidence="2" type="primary">ACRBP</name>
</gene>
<organism>
    <name type="scientific">Sus scrofa</name>
    <name type="common">Pig</name>
    <dbReference type="NCBI Taxonomy" id="9823"/>
    <lineage>
        <taxon>Eukaryota</taxon>
        <taxon>Metazoa</taxon>
        <taxon>Chordata</taxon>
        <taxon>Craniata</taxon>
        <taxon>Vertebrata</taxon>
        <taxon>Euteleostomi</taxon>
        <taxon>Mammalia</taxon>
        <taxon>Eutheria</taxon>
        <taxon>Laurasiatheria</taxon>
        <taxon>Artiodactyla</taxon>
        <taxon>Suina</taxon>
        <taxon>Suidae</taxon>
        <taxon>Sus</taxon>
    </lineage>
</organism>
<feature type="signal peptide" evidence="3">
    <location>
        <begin position="1"/>
        <end position="25"/>
    </location>
</feature>
<feature type="chain" id="PRO_0000227518" description="Acrosin-binding protein">
    <location>
        <begin position="26"/>
        <end position="539"/>
    </location>
</feature>
<feature type="propeptide" id="PRO_0000449371" description="Removed in active form" evidence="6">
    <location>
        <begin position="26"/>
        <end position="269"/>
    </location>
</feature>
<feature type="chain" id="PRO_0000449372" description="Acrosin-binding protein, mature form" evidence="6">
    <location>
        <begin position="270"/>
        <end position="539"/>
    </location>
</feature>
<feature type="region of interest" description="Pro-ACR binding" evidence="1">
    <location>
        <begin position="26"/>
        <end position="106"/>
    </location>
</feature>
<feature type="region of interest" description="Disordered" evidence="4">
    <location>
        <begin position="186"/>
        <end position="259"/>
    </location>
</feature>
<feature type="region of interest" description="Pro-ACR binding" evidence="1">
    <location>
        <begin position="315"/>
        <end position="423"/>
    </location>
</feature>
<feature type="compositionally biased region" description="Basic and acidic residues" evidence="4">
    <location>
        <begin position="192"/>
        <end position="211"/>
    </location>
</feature>
<feature type="compositionally biased region" description="Acidic residues" evidence="4">
    <location>
        <begin position="212"/>
        <end position="238"/>
    </location>
</feature>
<protein>
    <recommendedName>
        <fullName>Acrosin-binding protein</fullName>
    </recommendedName>
    <alternativeName>
        <fullName>Acrosin-binding protein, 60 kDa form</fullName>
    </alternativeName>
    <alternativeName>
        <fullName>Proacrosin-binding protein sp32</fullName>
    </alternativeName>
    <component>
        <recommendedName>
            <fullName>Acrosin-binding protein, mature form</fullName>
        </recommendedName>
        <alternativeName>
            <fullName>Acrosin-binding protein, 32 kDa form, mature form</fullName>
        </alternativeName>
        <alternativeName>
            <fullName evidence="8">Sp32</fullName>
        </alternativeName>
        <alternativeName>
            <fullName evidence="7">p32</fullName>
        </alternativeName>
    </component>
</protein>
<evidence type="ECO:0000250" key="1">
    <source>
        <dbReference type="UniProtKB" id="Q3V140"/>
    </source>
</evidence>
<evidence type="ECO:0000250" key="2">
    <source>
        <dbReference type="UniProtKB" id="Q8NEB7"/>
    </source>
</evidence>
<evidence type="ECO:0000255" key="3"/>
<evidence type="ECO:0000256" key="4">
    <source>
        <dbReference type="SAM" id="MobiDB-lite"/>
    </source>
</evidence>
<evidence type="ECO:0000269" key="5">
    <source>
    </source>
</evidence>
<evidence type="ECO:0000269" key="6">
    <source>
    </source>
</evidence>
<evidence type="ECO:0000303" key="7">
    <source>
    </source>
</evidence>
<evidence type="ECO:0000303" key="8">
    <source>
    </source>
</evidence>
<evidence type="ECO:0000305" key="9"/>
<evidence type="ECO:0000312" key="10">
    <source>
        <dbReference type="EMBL" id="BAA03737.1"/>
    </source>
</evidence>
<comment type="function">
    <molecule>Acrosin-binding protein, mature form</molecule>
    <text evidence="1 6">Acrosomal protein that maintains proacrosin (pro-ACR) as an enzymatically inactive zymogen in the acrosome (PubMed:8144514). Involved also in the acrosome formation (By similarity).</text>
</comment>
<comment type="subunit">
    <molecule>Acrosin-binding protein, mature form</molecule>
    <text evidence="6">Binds specifically to the 55- and 53-kDa proacrosins and the 49-kDa acrosin intermediate, but is not capable of binding 43-kDa acrosin intermediate and 32-kDa mature acrosin.</text>
</comment>
<comment type="subcellular location">
    <subcellularLocation>
        <location evidence="5 6">Secreted</location>
    </subcellularLocation>
    <subcellularLocation>
        <location evidence="5 6">Cytoplasmic vesicle</location>
        <location evidence="5 6">Secretory vesicle</location>
        <location evidence="5 6">Acrosome</location>
    </subcellularLocation>
    <text evidence="6">Appears to be present only in the round spermatids and elongating spermatids. Colocalizes in the acrosome with proacrosin.</text>
</comment>
<comment type="tissue specificity">
    <text evidence="6">Specifically expressed in testis.</text>
</comment>
<comment type="PTM">
    <text evidence="6">The N-terminus is blocked.</text>
</comment>
<comment type="PTM">
    <text evidence="6">Synthesized as a 60-kDa precursor, the 35-kDa mature form is post-translationally produced by the removal of the N-terminal half of the precursor during sperm maturation in the testis and/or epididymis.</text>
</comment>
<comment type="PTM">
    <text evidence="5">Phosphorylated on Tyr residues in capacitated sperm.</text>
</comment>
<sequence length="539" mass="60827">MRQLAAGSLLSLLKVLLLPLAPAPAQDANSASTPGSPLSPTEYERFFALLTPTWKAETTCRLRATHGCRNPTLVQLDQYENHGLVPDGAVCSDLPYASWFESFCQFTQYRCSNHVYYAKRVRCSQPVSILSPNSLKEVDTSSEVPITTMTSPVSSHITATGRQVFQPWPERLNNNVEELLQSSLSLGGQEQGQEHKQEHKQEQGQEHKQDEGQEQEEQEEEQEEEGKQEEGQGTEESLEAMSGLQADSEPKFQSEFVSSNPFSFTPRVREVESTPMMMENIQELIRSAQEMDEMGDVYEEENIWRAQSPGSLLQLPHVDALLVLCYSIVENTCVITPTAKAWQYLEDETLGFGKSVCDSLGRRHLAACSLCDFCSLKLEQCHSETNLQRQQCDNSHKTPFISPLLASQSMSIGTQIGTLKSGRFYGLDLYGGLRMDFWCARLATKGCEDNRVASWLQTEFLSFQDGDFPTKICDTEYVQYPNYCAFKSQQCMMRNRDRKVSRMRCLQNETYTVLTQAKSEDLVLRWSQEFSTLTLGQAG</sequence>
<accession>Q29016</accession>
<dbReference type="EMBL" id="D16200">
    <property type="protein sequence ID" value="BAA03737.1"/>
    <property type="molecule type" value="mRNA"/>
</dbReference>
<dbReference type="EMBL" id="AEMK02000037">
    <property type="status" value="NOT_ANNOTATED_CDS"/>
    <property type="molecule type" value="Genomic_DNA"/>
</dbReference>
<dbReference type="PIR" id="A54424">
    <property type="entry name" value="A54424"/>
</dbReference>
<dbReference type="RefSeq" id="XP_003126581.1">
    <property type="nucleotide sequence ID" value="XM_003126533.4"/>
</dbReference>
<dbReference type="FunCoup" id="Q29016">
    <property type="interactions" value="478"/>
</dbReference>
<dbReference type="STRING" id="9823.ENSSSCP00000000746"/>
<dbReference type="GlyGen" id="Q29016">
    <property type="glycosylation" value="1 site"/>
</dbReference>
<dbReference type="PaxDb" id="9823-ENSSSCP00000000746"/>
<dbReference type="PeptideAtlas" id="Q29016"/>
<dbReference type="Ensembl" id="ENSSSCT00000092092.1">
    <property type="protein sequence ID" value="ENSSSCP00000076796.1"/>
    <property type="gene ID" value="ENSSSCG00000000700.4"/>
</dbReference>
<dbReference type="Ensembl" id="ENSSSCT00025037724.1">
    <property type="protein sequence ID" value="ENSSSCP00025015851.1"/>
    <property type="gene ID" value="ENSSSCG00025027786.1"/>
</dbReference>
<dbReference type="Ensembl" id="ENSSSCT00030053689.1">
    <property type="protein sequence ID" value="ENSSSCP00030024505.1"/>
    <property type="gene ID" value="ENSSSCG00030038486.1"/>
</dbReference>
<dbReference type="Ensembl" id="ENSSSCT00035110972.1">
    <property type="protein sequence ID" value="ENSSSCP00035048498.1"/>
    <property type="gene ID" value="ENSSSCG00035080862.1"/>
</dbReference>
<dbReference type="Ensembl" id="ENSSSCT00040079975.1">
    <property type="protein sequence ID" value="ENSSSCP00040034585.1"/>
    <property type="gene ID" value="ENSSSCG00040058660.1"/>
</dbReference>
<dbReference type="Ensembl" id="ENSSSCT00045025396.1">
    <property type="protein sequence ID" value="ENSSSCP00045017530.1"/>
    <property type="gene ID" value="ENSSSCG00045014748.1"/>
</dbReference>
<dbReference type="Ensembl" id="ENSSSCT00050103889.1">
    <property type="protein sequence ID" value="ENSSSCP00050045501.1"/>
    <property type="gene ID" value="ENSSSCG00050075715.1"/>
</dbReference>
<dbReference type="Ensembl" id="ENSSSCT00055060263.1">
    <property type="protein sequence ID" value="ENSSSCP00055048288.1"/>
    <property type="gene ID" value="ENSSSCG00055030197.1"/>
</dbReference>
<dbReference type="Ensembl" id="ENSSSCT00060051882.1">
    <property type="protein sequence ID" value="ENSSSCP00060022078.1"/>
    <property type="gene ID" value="ENSSSCG00060038315.1"/>
</dbReference>
<dbReference type="Ensembl" id="ENSSSCT00065108364.1">
    <property type="protein sequence ID" value="ENSSSCP00065048417.1"/>
    <property type="gene ID" value="ENSSSCG00065078148.1"/>
</dbReference>
<dbReference type="Ensembl" id="ENSSSCT00070039850.1">
    <property type="protein sequence ID" value="ENSSSCP00070033376.1"/>
    <property type="gene ID" value="ENSSSCG00070020101.1"/>
</dbReference>
<dbReference type="Ensembl" id="ENSSSCT00085023823">
    <property type="protein sequence ID" value="ENSSSCP00085016360"/>
    <property type="gene ID" value="ENSSSCG00085012698"/>
</dbReference>
<dbReference type="Ensembl" id="ENSSSCT00090043693">
    <property type="protein sequence ID" value="ENSSSCP00090027331"/>
    <property type="gene ID" value="ENSSSCG00090024627"/>
</dbReference>
<dbReference type="Ensembl" id="ENSSSCT00105016083">
    <property type="protein sequence ID" value="ENSSSCP00105011404"/>
    <property type="gene ID" value="ENSSSCG00105008092"/>
</dbReference>
<dbReference type="Ensembl" id="ENSSSCT00110040501">
    <property type="protein sequence ID" value="ENSSSCP00110028242"/>
    <property type="gene ID" value="ENSSSCG00110020994"/>
</dbReference>
<dbReference type="Ensembl" id="ENSSSCT00115030468">
    <property type="protein sequence ID" value="ENSSSCP00115028964"/>
    <property type="gene ID" value="ENSSSCG00115017263"/>
</dbReference>
<dbReference type="Ensembl" id="ENSSSCT00130044137">
    <property type="protein sequence ID" value="ENSSSCP00130031076"/>
    <property type="gene ID" value="ENSSSCG00130022822"/>
</dbReference>
<dbReference type="GeneID" id="397317"/>
<dbReference type="KEGG" id="ssc:397317"/>
<dbReference type="CTD" id="84519"/>
<dbReference type="VGNC" id="VGNC:85029">
    <property type="gene designation" value="ACRBP"/>
</dbReference>
<dbReference type="eggNOG" id="ENOG502R6TS">
    <property type="taxonomic scope" value="Eukaryota"/>
</dbReference>
<dbReference type="GeneTree" id="ENSGT00390000000826"/>
<dbReference type="HOGENOM" id="CLU_534141_0_0_1"/>
<dbReference type="InParanoid" id="Q29016"/>
<dbReference type="OMA" id="YDEEPVW"/>
<dbReference type="OrthoDB" id="9009946at2759"/>
<dbReference type="Proteomes" id="UP000008227">
    <property type="component" value="Chromosome 5"/>
</dbReference>
<dbReference type="Proteomes" id="UP000314985">
    <property type="component" value="Chromosome 5"/>
</dbReference>
<dbReference type="Proteomes" id="UP000694570">
    <property type="component" value="Unplaced"/>
</dbReference>
<dbReference type="Proteomes" id="UP000694571">
    <property type="component" value="Unplaced"/>
</dbReference>
<dbReference type="Proteomes" id="UP000694720">
    <property type="component" value="Unplaced"/>
</dbReference>
<dbReference type="Proteomes" id="UP000694722">
    <property type="component" value="Unplaced"/>
</dbReference>
<dbReference type="Proteomes" id="UP000694723">
    <property type="component" value="Unplaced"/>
</dbReference>
<dbReference type="Proteomes" id="UP000694724">
    <property type="component" value="Unplaced"/>
</dbReference>
<dbReference type="Proteomes" id="UP000694725">
    <property type="component" value="Unplaced"/>
</dbReference>
<dbReference type="Proteomes" id="UP000694726">
    <property type="component" value="Unplaced"/>
</dbReference>
<dbReference type="Proteomes" id="UP000694727">
    <property type="component" value="Unplaced"/>
</dbReference>
<dbReference type="Proteomes" id="UP000694728">
    <property type="component" value="Unplaced"/>
</dbReference>
<dbReference type="Bgee" id="ENSSSCG00000000700">
    <property type="expression patterns" value="Expressed in testis and 41 other cell types or tissues"/>
</dbReference>
<dbReference type="ExpressionAtlas" id="Q29016">
    <property type="expression patterns" value="baseline and differential"/>
</dbReference>
<dbReference type="GO" id="GO:0002080">
    <property type="term" value="C:acrosomal membrane"/>
    <property type="evidence" value="ECO:0000314"/>
    <property type="project" value="UniProtKB"/>
</dbReference>
<dbReference type="GO" id="GO:0001669">
    <property type="term" value="C:acrosomal vesicle"/>
    <property type="evidence" value="ECO:0000314"/>
    <property type="project" value="UniProtKB"/>
</dbReference>
<dbReference type="GO" id="GO:0005576">
    <property type="term" value="C:extracellular region"/>
    <property type="evidence" value="ECO:0000314"/>
    <property type="project" value="UniProtKB"/>
</dbReference>
<dbReference type="GO" id="GO:0001675">
    <property type="term" value="P:acrosome assembly"/>
    <property type="evidence" value="ECO:0000250"/>
    <property type="project" value="UniProtKB"/>
</dbReference>
<dbReference type="GO" id="GO:0009566">
    <property type="term" value="P:fertilization"/>
    <property type="evidence" value="ECO:0007669"/>
    <property type="project" value="Ensembl"/>
</dbReference>
<dbReference type="GO" id="GO:0048240">
    <property type="term" value="P:sperm capacitation"/>
    <property type="evidence" value="ECO:0000304"/>
    <property type="project" value="UniProtKB"/>
</dbReference>
<dbReference type="InterPro" id="IPR009865">
    <property type="entry name" value="Proacrosin-bd"/>
</dbReference>
<dbReference type="PANTHER" id="PTHR21362">
    <property type="entry name" value="ACROSIN-BINDING PROTEIN"/>
    <property type="match status" value="1"/>
</dbReference>
<dbReference type="PANTHER" id="PTHR21362:SF1">
    <property type="entry name" value="ACROSIN-BINDING PROTEIN"/>
    <property type="match status" value="1"/>
</dbReference>
<dbReference type="Pfam" id="PF07222">
    <property type="entry name" value="PBP_sp32"/>
    <property type="match status" value="1"/>
</dbReference>
<keyword id="KW-0968">Cytoplasmic vesicle</keyword>
<keyword id="KW-0903">Direct protein sequencing</keyword>
<keyword id="KW-0597">Phosphoprotein</keyword>
<keyword id="KW-1185">Reference proteome</keyword>
<keyword id="KW-0964">Secreted</keyword>
<keyword id="KW-0732">Signal</keyword>
<reference evidence="9 10" key="1">
    <citation type="journal article" date="1994" name="J. Biol. Chem.">
        <title>An acrosomal protein, sp32, mammalian sperm is a binding protein specific for two proacrosins and an acrosin intermediate.</title>
        <authorList>
            <person name="Baba T."/>
            <person name="Niida Y."/>
            <person name="Michikawa Y."/>
            <person name="Kashiwabara S."/>
            <person name="Kodaira K."/>
            <person name="Takenaka M."/>
            <person name="Kohno N."/>
            <person name="Gerton G.L."/>
            <person name="Arai Y."/>
        </authorList>
    </citation>
    <scope>NUCLEOTIDE SEQUENCE [MRNA]</scope>
    <scope>INTERACTION WITH PROACROSIN</scope>
    <scope>SUBCELLULAR LOCATION</scope>
    <scope>TISSUE SPECIFICITY</scope>
    <scope>PROTEIN SEQUENCE OF 424-430</scope>
    <scope>PROTEOLYTIC CLEAVAGE</scope>
    <scope>FUNCTION</scope>
    <source>
        <tissue evidence="10">Testis</tissue>
    </source>
</reference>
<reference key="2">
    <citation type="submission" date="2009-11" db="EMBL/GenBank/DDBJ databases">
        <authorList>
            <consortium name="Porcine genome sequencing project"/>
        </authorList>
    </citation>
    <scope>NUCLEOTIDE SEQUENCE [LARGE SCALE GENOMIC DNA]</scope>
    <source>
        <strain>Duroc</strain>
    </source>
</reference>
<reference evidence="9" key="3">
    <citation type="journal article" date="2005" name="J. Androl.">
        <title>The proacrosin binding protein, sp32, is tyrosine phosphorylated during capacitation of pig sperm.</title>
        <authorList>
            <person name="Dube C."/>
            <person name="Leclerc P."/>
            <person name="Baba T."/>
            <person name="Reyes-Moreno C."/>
            <person name="Bailey J.L."/>
        </authorList>
    </citation>
    <scope>SUBCELLULAR LOCATION</scope>
    <scope>PHOSPHORYLATION</scope>
</reference>
<proteinExistence type="evidence at protein level"/>
<name>ACRBP_PIG</name>